<proteinExistence type="inferred from homology"/>
<evidence type="ECO:0000255" key="1">
    <source>
        <dbReference type="HAMAP-Rule" id="MF_00097"/>
    </source>
</evidence>
<keyword id="KW-0460">Magnesium</keyword>
<keyword id="KW-0479">Metal-binding</keyword>
<keyword id="KW-1185">Reference proteome</keyword>
<keyword id="KW-0784">Thiamine biosynthesis</keyword>
<keyword id="KW-0808">Transferase</keyword>
<accession>B8E358</accession>
<name>THIE_DICTD</name>
<dbReference type="EC" id="2.5.1.3" evidence="1"/>
<dbReference type="EMBL" id="CP001251">
    <property type="protein sequence ID" value="ACK42932.1"/>
    <property type="molecule type" value="Genomic_DNA"/>
</dbReference>
<dbReference type="RefSeq" id="WP_012584007.1">
    <property type="nucleotide sequence ID" value="NC_011661.1"/>
</dbReference>
<dbReference type="RefSeq" id="YP_002353546.1">
    <property type="nucleotide sequence ID" value="NC_011661.1"/>
</dbReference>
<dbReference type="SMR" id="B8E358"/>
<dbReference type="FunCoup" id="B8E358">
    <property type="interactions" value="265"/>
</dbReference>
<dbReference type="STRING" id="515635.Dtur_1660"/>
<dbReference type="EnsemblBacteria" id="ACK42932">
    <property type="protein sequence ID" value="ACK42932"/>
    <property type="gene ID" value="Dtur_1660"/>
</dbReference>
<dbReference type="KEGG" id="dtu:Dtur_1660"/>
<dbReference type="PATRIC" id="fig|515635.4.peg.1710"/>
<dbReference type="eggNOG" id="COG0352">
    <property type="taxonomic scope" value="Bacteria"/>
</dbReference>
<dbReference type="HOGENOM" id="CLU_018272_3_2_0"/>
<dbReference type="InParanoid" id="B8E358"/>
<dbReference type="OrthoDB" id="9812206at2"/>
<dbReference type="UniPathway" id="UPA00060">
    <property type="reaction ID" value="UER00141"/>
</dbReference>
<dbReference type="Proteomes" id="UP000007719">
    <property type="component" value="Chromosome"/>
</dbReference>
<dbReference type="GO" id="GO:0005737">
    <property type="term" value="C:cytoplasm"/>
    <property type="evidence" value="ECO:0000318"/>
    <property type="project" value="GO_Central"/>
</dbReference>
<dbReference type="GO" id="GO:0000287">
    <property type="term" value="F:magnesium ion binding"/>
    <property type="evidence" value="ECO:0007669"/>
    <property type="project" value="UniProtKB-UniRule"/>
</dbReference>
<dbReference type="GO" id="GO:0004789">
    <property type="term" value="F:thiamine-phosphate diphosphorylase activity"/>
    <property type="evidence" value="ECO:0000318"/>
    <property type="project" value="GO_Central"/>
</dbReference>
<dbReference type="GO" id="GO:0009228">
    <property type="term" value="P:thiamine biosynthetic process"/>
    <property type="evidence" value="ECO:0000318"/>
    <property type="project" value="GO_Central"/>
</dbReference>
<dbReference type="GO" id="GO:0009229">
    <property type="term" value="P:thiamine diphosphate biosynthetic process"/>
    <property type="evidence" value="ECO:0007669"/>
    <property type="project" value="UniProtKB-UniRule"/>
</dbReference>
<dbReference type="CDD" id="cd00564">
    <property type="entry name" value="TMP_TenI"/>
    <property type="match status" value="1"/>
</dbReference>
<dbReference type="FunFam" id="3.20.20.70:FF:000096">
    <property type="entry name" value="Thiamine-phosphate synthase"/>
    <property type="match status" value="1"/>
</dbReference>
<dbReference type="Gene3D" id="3.20.20.70">
    <property type="entry name" value="Aldolase class I"/>
    <property type="match status" value="1"/>
</dbReference>
<dbReference type="HAMAP" id="MF_00097">
    <property type="entry name" value="TMP_synthase"/>
    <property type="match status" value="1"/>
</dbReference>
<dbReference type="InterPro" id="IPR013785">
    <property type="entry name" value="Aldolase_TIM"/>
</dbReference>
<dbReference type="InterPro" id="IPR036206">
    <property type="entry name" value="ThiamineP_synth_sf"/>
</dbReference>
<dbReference type="InterPro" id="IPR022998">
    <property type="entry name" value="ThiamineP_synth_TenI"/>
</dbReference>
<dbReference type="InterPro" id="IPR034291">
    <property type="entry name" value="TMP_synthase"/>
</dbReference>
<dbReference type="NCBIfam" id="TIGR00693">
    <property type="entry name" value="thiE"/>
    <property type="match status" value="1"/>
</dbReference>
<dbReference type="PANTHER" id="PTHR20857">
    <property type="entry name" value="THIAMINE-PHOSPHATE PYROPHOSPHORYLASE"/>
    <property type="match status" value="1"/>
</dbReference>
<dbReference type="PANTHER" id="PTHR20857:SF15">
    <property type="entry name" value="THIAMINE-PHOSPHATE SYNTHASE"/>
    <property type="match status" value="1"/>
</dbReference>
<dbReference type="Pfam" id="PF02581">
    <property type="entry name" value="TMP-TENI"/>
    <property type="match status" value="1"/>
</dbReference>
<dbReference type="SUPFAM" id="SSF51391">
    <property type="entry name" value="Thiamin phosphate synthase"/>
    <property type="match status" value="1"/>
</dbReference>
<gene>
    <name evidence="1" type="primary">thiE</name>
    <name type="ordered locus">Dtur_1660</name>
</gene>
<organism>
    <name type="scientific">Dictyoglomus turgidum (strain DSM 6724 / Z-1310)</name>
    <dbReference type="NCBI Taxonomy" id="515635"/>
    <lineage>
        <taxon>Bacteria</taxon>
        <taxon>Pseudomonadati</taxon>
        <taxon>Dictyoglomota</taxon>
        <taxon>Dictyoglomia</taxon>
        <taxon>Dictyoglomales</taxon>
        <taxon>Dictyoglomaceae</taxon>
        <taxon>Dictyoglomus</taxon>
    </lineage>
</organism>
<reference key="1">
    <citation type="journal article" date="2016" name="Front. Microbiol.">
        <title>The complete genome sequence of hyperthermophile Dictyoglomus turgidum DSM 6724 reveals a specialized carbohydrate fermentor.</title>
        <authorList>
            <person name="Brumm P.J."/>
            <person name="Gowda K."/>
            <person name="Robb F.T."/>
            <person name="Mead D.A."/>
        </authorList>
    </citation>
    <scope>NUCLEOTIDE SEQUENCE [LARGE SCALE GENOMIC DNA]</scope>
    <source>
        <strain>DSM 6724 / Z-1310</strain>
    </source>
</reference>
<feature type="chain" id="PRO_1000117299" description="Thiamine-phosphate synthase">
    <location>
        <begin position="1"/>
        <end position="223"/>
    </location>
</feature>
<feature type="binding site" evidence="1">
    <location>
        <begin position="45"/>
        <end position="49"/>
    </location>
    <ligand>
        <name>4-amino-2-methyl-5-(diphosphooxymethyl)pyrimidine</name>
        <dbReference type="ChEBI" id="CHEBI:57841"/>
    </ligand>
</feature>
<feature type="binding site" evidence="1">
    <location>
        <position position="77"/>
    </location>
    <ligand>
        <name>4-amino-2-methyl-5-(diphosphooxymethyl)pyrimidine</name>
        <dbReference type="ChEBI" id="CHEBI:57841"/>
    </ligand>
</feature>
<feature type="binding site" evidence="1">
    <location>
        <position position="78"/>
    </location>
    <ligand>
        <name>Mg(2+)</name>
        <dbReference type="ChEBI" id="CHEBI:18420"/>
    </ligand>
</feature>
<feature type="binding site" evidence="1">
    <location>
        <position position="97"/>
    </location>
    <ligand>
        <name>Mg(2+)</name>
        <dbReference type="ChEBI" id="CHEBI:18420"/>
    </ligand>
</feature>
<feature type="binding site" evidence="1">
    <location>
        <position position="116"/>
    </location>
    <ligand>
        <name>4-amino-2-methyl-5-(diphosphooxymethyl)pyrimidine</name>
        <dbReference type="ChEBI" id="CHEBI:57841"/>
    </ligand>
</feature>
<feature type="binding site" evidence="1">
    <location>
        <begin position="142"/>
        <end position="144"/>
    </location>
    <ligand>
        <name>2-[(2R,5Z)-2-carboxy-4-methylthiazol-5(2H)-ylidene]ethyl phosphate</name>
        <dbReference type="ChEBI" id="CHEBI:62899"/>
    </ligand>
</feature>
<feature type="binding site" evidence="1">
    <location>
        <position position="145"/>
    </location>
    <ligand>
        <name>4-amino-2-methyl-5-(diphosphooxymethyl)pyrimidine</name>
        <dbReference type="ChEBI" id="CHEBI:57841"/>
    </ligand>
</feature>
<feature type="binding site" evidence="1">
    <location>
        <position position="173"/>
    </location>
    <ligand>
        <name>2-[(2R,5Z)-2-carboxy-4-methylthiazol-5(2H)-ylidene]ethyl phosphate</name>
        <dbReference type="ChEBI" id="CHEBI:62899"/>
    </ligand>
</feature>
<feature type="binding site" evidence="1">
    <location>
        <begin position="193"/>
        <end position="194"/>
    </location>
    <ligand>
        <name>2-[(2R,5Z)-2-carboxy-4-methylthiazol-5(2H)-ylidene]ethyl phosphate</name>
        <dbReference type="ChEBI" id="CHEBI:62899"/>
    </ligand>
</feature>
<protein>
    <recommendedName>
        <fullName evidence="1">Thiamine-phosphate synthase</fullName>
        <shortName evidence="1">TP synthase</shortName>
        <shortName evidence="1">TPS</shortName>
        <ecNumber evidence="1">2.5.1.3</ecNumber>
    </recommendedName>
    <alternativeName>
        <fullName evidence="1">Thiamine-phosphate pyrophosphorylase</fullName>
        <shortName evidence="1">TMP pyrophosphorylase</shortName>
        <shortName evidence="1">TMP-PPase</shortName>
    </alternativeName>
</protein>
<sequence>MNKKEKLELLKDFNLYCLTCEEYSIGRKNIDVVREILEAGVKIIQYREKKKPMREKYHEVVKIRDLTAKYNALLIVNDHLDLTKIVEADGVHIGQEDYPIEVAKEFLGENFIIGLTTHTKEQVMEALRKGADYIGLGPIFPSYTKEKPHPPIGIEILDWAIKNISIPVVAIGGIKESNIHEILNLGAKCIAMVTEIVSSPNIYEKTRKIIHILEGYKNGKYIA</sequence>
<comment type="function">
    <text evidence="1">Condenses 4-methyl-5-(beta-hydroxyethyl)thiazole monophosphate (THZ-P) and 2-methyl-4-amino-5-hydroxymethyl pyrimidine pyrophosphate (HMP-PP) to form thiamine monophosphate (TMP).</text>
</comment>
<comment type="catalytic activity">
    <reaction evidence="1">
        <text>2-[(2R,5Z)-2-carboxy-4-methylthiazol-5(2H)-ylidene]ethyl phosphate + 4-amino-2-methyl-5-(diphosphooxymethyl)pyrimidine + 2 H(+) = thiamine phosphate + CO2 + diphosphate</text>
        <dbReference type="Rhea" id="RHEA:47844"/>
        <dbReference type="ChEBI" id="CHEBI:15378"/>
        <dbReference type="ChEBI" id="CHEBI:16526"/>
        <dbReference type="ChEBI" id="CHEBI:33019"/>
        <dbReference type="ChEBI" id="CHEBI:37575"/>
        <dbReference type="ChEBI" id="CHEBI:57841"/>
        <dbReference type="ChEBI" id="CHEBI:62899"/>
        <dbReference type="EC" id="2.5.1.3"/>
    </reaction>
</comment>
<comment type="catalytic activity">
    <reaction evidence="1">
        <text>2-(2-carboxy-4-methylthiazol-5-yl)ethyl phosphate + 4-amino-2-methyl-5-(diphosphooxymethyl)pyrimidine + 2 H(+) = thiamine phosphate + CO2 + diphosphate</text>
        <dbReference type="Rhea" id="RHEA:47848"/>
        <dbReference type="ChEBI" id="CHEBI:15378"/>
        <dbReference type="ChEBI" id="CHEBI:16526"/>
        <dbReference type="ChEBI" id="CHEBI:33019"/>
        <dbReference type="ChEBI" id="CHEBI:37575"/>
        <dbReference type="ChEBI" id="CHEBI:57841"/>
        <dbReference type="ChEBI" id="CHEBI:62890"/>
        <dbReference type="EC" id="2.5.1.3"/>
    </reaction>
</comment>
<comment type="catalytic activity">
    <reaction evidence="1">
        <text>4-methyl-5-(2-phosphooxyethyl)-thiazole + 4-amino-2-methyl-5-(diphosphooxymethyl)pyrimidine + H(+) = thiamine phosphate + diphosphate</text>
        <dbReference type="Rhea" id="RHEA:22328"/>
        <dbReference type="ChEBI" id="CHEBI:15378"/>
        <dbReference type="ChEBI" id="CHEBI:33019"/>
        <dbReference type="ChEBI" id="CHEBI:37575"/>
        <dbReference type="ChEBI" id="CHEBI:57841"/>
        <dbReference type="ChEBI" id="CHEBI:58296"/>
        <dbReference type="EC" id="2.5.1.3"/>
    </reaction>
</comment>
<comment type="cofactor">
    <cofactor evidence="1">
        <name>Mg(2+)</name>
        <dbReference type="ChEBI" id="CHEBI:18420"/>
    </cofactor>
    <text evidence="1">Binds 1 Mg(2+) ion per subunit.</text>
</comment>
<comment type="pathway">
    <text evidence="1">Cofactor biosynthesis; thiamine diphosphate biosynthesis; thiamine phosphate from 4-amino-2-methyl-5-diphosphomethylpyrimidine and 4-methyl-5-(2-phosphoethyl)-thiazole: step 1/1.</text>
</comment>
<comment type="similarity">
    <text evidence="1">Belongs to the thiamine-phosphate synthase family.</text>
</comment>